<name>RAN_TETTH</name>
<evidence type="ECO:0000250" key="1"/>
<evidence type="ECO:0000250" key="2">
    <source>
        <dbReference type="UniProtKB" id="P62825"/>
    </source>
</evidence>
<evidence type="ECO:0000255" key="3">
    <source>
        <dbReference type="PROSITE-ProRule" id="PRU00752"/>
    </source>
</evidence>
<evidence type="ECO:0000305" key="4"/>
<accession>P41915</accession>
<reference key="1">
    <citation type="journal article" date="1994" name="Gene">
        <title>Cloning of cDNAs encoding a cell-cycle-regulatory GTP-binding low-M(r) (GBLM) protein, Ran/TC4, from micronucleated Tetrahymena thermophila and amicronucleated Tetrahymena pyriformis.</title>
        <authorList>
            <person name="Nagata K."/>
            <person name="Takemasa T."/>
            <person name="Alam S."/>
            <person name="Hattori T."/>
            <person name="Watanabe Y."/>
            <person name="Nozawa Y."/>
        </authorList>
    </citation>
    <scope>NUCLEOTIDE SEQUENCE [MRNA]</scope>
    <source>
        <strain>B1868</strain>
    </source>
</reference>
<keyword id="KW-0342">GTP-binding</keyword>
<keyword id="KW-0547">Nucleotide-binding</keyword>
<keyword id="KW-0539">Nucleus</keyword>
<keyword id="KW-0653">Protein transport</keyword>
<keyword id="KW-0813">Transport</keyword>
<proteinExistence type="evidence at transcript level"/>
<comment type="function">
    <text evidence="1">GTP-binding protein involved in nucleocytoplasmic transport. Required for the import of protein into the nucleus and also for RNA export. Involved in chromatin condensation and control of cell cycle (By similarity).</text>
</comment>
<comment type="subunit">
    <text evidence="2">Monomer. Found in a nuclear export complex with RanGTP, exportin and pre-miRNA (By similarity).</text>
</comment>
<comment type="subcellular location">
    <subcellularLocation>
        <location evidence="1">Nucleus</location>
    </subcellularLocation>
</comment>
<comment type="similarity">
    <text evidence="3 4">Belongs to the small GTPase superfamily. Ran family.</text>
</comment>
<dbReference type="EMBL" id="D17748">
    <property type="protein sequence ID" value="BAA04600.1"/>
    <property type="molecule type" value="mRNA"/>
</dbReference>
<dbReference type="SMR" id="P41915"/>
<dbReference type="OMA" id="QCLICIS"/>
<dbReference type="GO" id="GO:0005737">
    <property type="term" value="C:cytoplasm"/>
    <property type="evidence" value="ECO:0007669"/>
    <property type="project" value="TreeGrafter"/>
</dbReference>
<dbReference type="GO" id="GO:0005634">
    <property type="term" value="C:nucleus"/>
    <property type="evidence" value="ECO:0007669"/>
    <property type="project" value="UniProtKB-SubCell"/>
</dbReference>
<dbReference type="GO" id="GO:0005525">
    <property type="term" value="F:GTP binding"/>
    <property type="evidence" value="ECO:0007669"/>
    <property type="project" value="UniProtKB-KW"/>
</dbReference>
<dbReference type="GO" id="GO:0003924">
    <property type="term" value="F:GTPase activity"/>
    <property type="evidence" value="ECO:0007669"/>
    <property type="project" value="InterPro"/>
</dbReference>
<dbReference type="GO" id="GO:0006606">
    <property type="term" value="P:protein import into nucleus"/>
    <property type="evidence" value="ECO:0007669"/>
    <property type="project" value="TreeGrafter"/>
</dbReference>
<dbReference type="GO" id="GO:0000054">
    <property type="term" value="P:ribosomal subunit export from nucleus"/>
    <property type="evidence" value="ECO:0007669"/>
    <property type="project" value="TreeGrafter"/>
</dbReference>
<dbReference type="CDD" id="cd00877">
    <property type="entry name" value="Ran"/>
    <property type="match status" value="1"/>
</dbReference>
<dbReference type="FunFam" id="3.40.50.300:FF:000369">
    <property type="entry name" value="GTP-binding nuclear protein"/>
    <property type="match status" value="1"/>
</dbReference>
<dbReference type="Gene3D" id="3.40.50.300">
    <property type="entry name" value="P-loop containing nucleotide triphosphate hydrolases"/>
    <property type="match status" value="1"/>
</dbReference>
<dbReference type="InterPro" id="IPR027417">
    <property type="entry name" value="P-loop_NTPase"/>
</dbReference>
<dbReference type="InterPro" id="IPR002041">
    <property type="entry name" value="Ran_GTPase"/>
</dbReference>
<dbReference type="InterPro" id="IPR005225">
    <property type="entry name" value="Small_GTP-bd"/>
</dbReference>
<dbReference type="InterPro" id="IPR001806">
    <property type="entry name" value="Small_GTPase"/>
</dbReference>
<dbReference type="NCBIfam" id="TIGR00231">
    <property type="entry name" value="small_GTP"/>
    <property type="match status" value="1"/>
</dbReference>
<dbReference type="PANTHER" id="PTHR24071:SF0">
    <property type="entry name" value="GTP-BINDING NUCLEAR PROTEIN RAN"/>
    <property type="match status" value="1"/>
</dbReference>
<dbReference type="PANTHER" id="PTHR24071">
    <property type="entry name" value="RAN GTPASE"/>
    <property type="match status" value="1"/>
</dbReference>
<dbReference type="Pfam" id="PF00071">
    <property type="entry name" value="Ras"/>
    <property type="match status" value="1"/>
</dbReference>
<dbReference type="PRINTS" id="PR00627">
    <property type="entry name" value="GTPRANTC4"/>
</dbReference>
<dbReference type="SMART" id="SM00175">
    <property type="entry name" value="RAB"/>
    <property type="match status" value="1"/>
</dbReference>
<dbReference type="SMART" id="SM00176">
    <property type="entry name" value="RAN"/>
    <property type="match status" value="1"/>
</dbReference>
<dbReference type="SMART" id="SM00173">
    <property type="entry name" value="RAS"/>
    <property type="match status" value="1"/>
</dbReference>
<dbReference type="SMART" id="SM00174">
    <property type="entry name" value="RHO"/>
    <property type="match status" value="1"/>
</dbReference>
<dbReference type="SUPFAM" id="SSF52540">
    <property type="entry name" value="P-loop containing nucleoside triphosphate hydrolases"/>
    <property type="match status" value="1"/>
</dbReference>
<dbReference type="PROSITE" id="PS51418">
    <property type="entry name" value="RAN"/>
    <property type="match status" value="1"/>
</dbReference>
<protein>
    <recommendedName>
        <fullName>GTP-binding nuclear protein Ran</fullName>
    </recommendedName>
    <alternativeName>
        <fullName>GTPase Ran</fullName>
    </alternativeName>
    <alternativeName>
        <fullName>Ras-like protein TC4</fullName>
    </alternativeName>
</protein>
<sequence>MVDNKQNVVAEFKLVLVGDGGVGKTTFVTRHQTGEFEKRYIATQGVNVSNMVLYTTKGPIRFNIWDTAGQEKLGGLREGYYIGANAAIMMFDVTSRITYKNIPKWHKDLTRICENIPIVLVGNKVDSKDRKVKARQITFHRKRSLQYYDVSAKSNYQYEKPFLWILRKLTGDPTLNLVEGIALVAPDTEHVMTEDQIKQLEMEQAEAMNLAQQGVLPDDEDDEFN</sequence>
<feature type="chain" id="PRO_0000208716" description="GTP-binding nuclear protein Ran">
    <location>
        <begin position="1"/>
        <end position="225"/>
    </location>
</feature>
<feature type="domain" description="Small GTPase Ran-type" evidence="3">
    <location>
        <begin position="8"/>
        <end position="172"/>
    </location>
</feature>
<feature type="region of interest" description="Switch-I" evidence="3">
    <location>
        <begin position="38"/>
        <end position="46"/>
    </location>
</feature>
<feature type="region of interest" description="Switch-II" evidence="3">
    <location>
        <begin position="69"/>
        <end position="85"/>
    </location>
</feature>
<feature type="binding site" evidence="2">
    <location>
        <begin position="19"/>
        <end position="26"/>
    </location>
    <ligand>
        <name>GTP</name>
        <dbReference type="ChEBI" id="CHEBI:37565"/>
    </ligand>
</feature>
<feature type="binding site" evidence="2">
    <location>
        <position position="69"/>
    </location>
    <ligand>
        <name>GTP</name>
        <dbReference type="ChEBI" id="CHEBI:37565"/>
    </ligand>
</feature>
<feature type="binding site" evidence="2">
    <location>
        <begin position="123"/>
        <end position="126"/>
    </location>
    <ligand>
        <name>GTP</name>
        <dbReference type="ChEBI" id="CHEBI:37565"/>
    </ligand>
</feature>
<feature type="binding site" evidence="2">
    <location>
        <begin position="151"/>
        <end position="153"/>
    </location>
    <ligand>
        <name>GTP</name>
        <dbReference type="ChEBI" id="CHEBI:37565"/>
    </ligand>
</feature>
<organism>
    <name type="scientific">Tetrahymena thermophila</name>
    <dbReference type="NCBI Taxonomy" id="5911"/>
    <lineage>
        <taxon>Eukaryota</taxon>
        <taxon>Sar</taxon>
        <taxon>Alveolata</taxon>
        <taxon>Ciliophora</taxon>
        <taxon>Intramacronucleata</taxon>
        <taxon>Oligohymenophorea</taxon>
        <taxon>Hymenostomatida</taxon>
        <taxon>Tetrahymenina</taxon>
        <taxon>Tetrahymenidae</taxon>
        <taxon>Tetrahymena</taxon>
    </lineage>
</organism>